<name>RISB_ECOL6</name>
<evidence type="ECO:0000255" key="1">
    <source>
        <dbReference type="HAMAP-Rule" id="MF_00178"/>
    </source>
</evidence>
<evidence type="ECO:0000305" key="2"/>
<comment type="function">
    <text evidence="1">Catalyzes the formation of 6,7-dimethyl-8-ribityllumazine by condensation of 5-amino-6-(D-ribitylamino)uracil with 3,4-dihydroxy-2-butanone 4-phosphate. This is the penultimate step in the biosynthesis of riboflavin.</text>
</comment>
<comment type="catalytic activity">
    <reaction evidence="1">
        <text>(2S)-2-hydroxy-3-oxobutyl phosphate + 5-amino-6-(D-ribitylamino)uracil = 6,7-dimethyl-8-(1-D-ribityl)lumazine + phosphate + 2 H2O + H(+)</text>
        <dbReference type="Rhea" id="RHEA:26152"/>
        <dbReference type="ChEBI" id="CHEBI:15377"/>
        <dbReference type="ChEBI" id="CHEBI:15378"/>
        <dbReference type="ChEBI" id="CHEBI:15934"/>
        <dbReference type="ChEBI" id="CHEBI:43474"/>
        <dbReference type="ChEBI" id="CHEBI:58201"/>
        <dbReference type="ChEBI" id="CHEBI:58830"/>
        <dbReference type="EC" id="2.5.1.78"/>
    </reaction>
</comment>
<comment type="pathway">
    <text evidence="1">Cofactor biosynthesis; riboflavin biosynthesis; riboflavin from 2-hydroxy-3-oxobutyl phosphate and 5-amino-6-(D-ribitylamino)uracil: step 1/2.</text>
</comment>
<comment type="subunit">
    <text evidence="1">Forms an icosahedral capsid composed of 60 subunits, arranged as a dodecamer of pentamers.</text>
</comment>
<comment type="similarity">
    <text evidence="1">Belongs to the DMRL synthase family.</text>
</comment>
<comment type="sequence caution" evidence="2">
    <conflict type="erroneous initiation">
        <sequence resource="EMBL-CDS" id="AAN79003"/>
    </conflict>
</comment>
<sequence>MNIIEANVATPDARVAITIARFNNFINDSLLEGAIDALKRIGQVKDENITVVWVPGAYELPLAAGALAKTGKYDAVIALGTVIRGGTAHFEYVAGGASNGLAHVAQDSEIPVAFGVLTTESIEQAIERAGTKAGNKGAEAALTALEMINVLKAIKA</sequence>
<gene>
    <name evidence="1" type="primary">ribH</name>
    <name type="synonym">ribE</name>
    <name type="ordered locus">c0525</name>
</gene>
<dbReference type="EC" id="2.5.1.78" evidence="1"/>
<dbReference type="EMBL" id="AE014075">
    <property type="protein sequence ID" value="AAN79003.1"/>
    <property type="status" value="ALT_INIT"/>
    <property type="molecule type" value="Genomic_DNA"/>
</dbReference>
<dbReference type="RefSeq" id="WP_001021161.1">
    <property type="nucleotide sequence ID" value="NZ_CP051263.1"/>
</dbReference>
<dbReference type="SMR" id="P61715"/>
<dbReference type="STRING" id="199310.c0525"/>
<dbReference type="GeneID" id="98391920"/>
<dbReference type="KEGG" id="ecc:c0525"/>
<dbReference type="eggNOG" id="COG0054">
    <property type="taxonomic scope" value="Bacteria"/>
</dbReference>
<dbReference type="HOGENOM" id="CLU_089358_1_1_6"/>
<dbReference type="UniPathway" id="UPA00275">
    <property type="reaction ID" value="UER00404"/>
</dbReference>
<dbReference type="Proteomes" id="UP000001410">
    <property type="component" value="Chromosome"/>
</dbReference>
<dbReference type="GO" id="GO:0005829">
    <property type="term" value="C:cytosol"/>
    <property type="evidence" value="ECO:0007669"/>
    <property type="project" value="TreeGrafter"/>
</dbReference>
<dbReference type="GO" id="GO:0009349">
    <property type="term" value="C:riboflavin synthase complex"/>
    <property type="evidence" value="ECO:0007669"/>
    <property type="project" value="InterPro"/>
</dbReference>
<dbReference type="GO" id="GO:0000906">
    <property type="term" value="F:6,7-dimethyl-8-ribityllumazine synthase activity"/>
    <property type="evidence" value="ECO:0007669"/>
    <property type="project" value="UniProtKB-UniRule"/>
</dbReference>
<dbReference type="GO" id="GO:0009231">
    <property type="term" value="P:riboflavin biosynthetic process"/>
    <property type="evidence" value="ECO:0007669"/>
    <property type="project" value="UniProtKB-UniRule"/>
</dbReference>
<dbReference type="CDD" id="cd09209">
    <property type="entry name" value="Lumazine_synthase-I"/>
    <property type="match status" value="1"/>
</dbReference>
<dbReference type="FunFam" id="3.40.50.960:FF:000001">
    <property type="entry name" value="6,7-dimethyl-8-ribityllumazine synthase"/>
    <property type="match status" value="1"/>
</dbReference>
<dbReference type="Gene3D" id="3.40.50.960">
    <property type="entry name" value="Lumazine/riboflavin synthase"/>
    <property type="match status" value="1"/>
</dbReference>
<dbReference type="HAMAP" id="MF_00178">
    <property type="entry name" value="Lumazine_synth"/>
    <property type="match status" value="1"/>
</dbReference>
<dbReference type="InterPro" id="IPR034964">
    <property type="entry name" value="LS"/>
</dbReference>
<dbReference type="InterPro" id="IPR002180">
    <property type="entry name" value="LS/RS"/>
</dbReference>
<dbReference type="InterPro" id="IPR036467">
    <property type="entry name" value="LS/RS_sf"/>
</dbReference>
<dbReference type="NCBIfam" id="TIGR00114">
    <property type="entry name" value="lumazine-synth"/>
    <property type="match status" value="1"/>
</dbReference>
<dbReference type="NCBIfam" id="NF000812">
    <property type="entry name" value="PRK00061.1-4"/>
    <property type="match status" value="1"/>
</dbReference>
<dbReference type="PANTHER" id="PTHR21058:SF0">
    <property type="entry name" value="6,7-DIMETHYL-8-RIBITYLLUMAZINE SYNTHASE"/>
    <property type="match status" value="1"/>
</dbReference>
<dbReference type="PANTHER" id="PTHR21058">
    <property type="entry name" value="6,7-DIMETHYL-8-RIBITYLLUMAZINE SYNTHASE DMRL SYNTHASE LUMAZINE SYNTHASE"/>
    <property type="match status" value="1"/>
</dbReference>
<dbReference type="Pfam" id="PF00885">
    <property type="entry name" value="DMRL_synthase"/>
    <property type="match status" value="1"/>
</dbReference>
<dbReference type="SUPFAM" id="SSF52121">
    <property type="entry name" value="Lumazine synthase"/>
    <property type="match status" value="1"/>
</dbReference>
<accession>P61715</accession>
<accession>P25540</accession>
<accession>P77114</accession>
<proteinExistence type="inferred from homology"/>
<feature type="chain" id="PRO_0000134755" description="6,7-dimethyl-8-ribityllumazine synthase">
    <location>
        <begin position="1"/>
        <end position="156"/>
    </location>
</feature>
<feature type="active site" description="Proton donor" evidence="1">
    <location>
        <position position="89"/>
    </location>
</feature>
<feature type="binding site" evidence="1">
    <location>
        <position position="22"/>
    </location>
    <ligand>
        <name>5-amino-6-(D-ribitylamino)uracil</name>
        <dbReference type="ChEBI" id="CHEBI:15934"/>
    </ligand>
</feature>
<feature type="binding site" evidence="1">
    <location>
        <begin position="57"/>
        <end position="59"/>
    </location>
    <ligand>
        <name>5-amino-6-(D-ribitylamino)uracil</name>
        <dbReference type="ChEBI" id="CHEBI:15934"/>
    </ligand>
</feature>
<feature type="binding site" evidence="1">
    <location>
        <begin position="81"/>
        <end position="83"/>
    </location>
    <ligand>
        <name>5-amino-6-(D-ribitylamino)uracil</name>
        <dbReference type="ChEBI" id="CHEBI:15934"/>
    </ligand>
</feature>
<feature type="binding site" evidence="1">
    <location>
        <begin position="86"/>
        <end position="87"/>
    </location>
    <ligand>
        <name>(2S)-2-hydroxy-3-oxobutyl phosphate</name>
        <dbReference type="ChEBI" id="CHEBI:58830"/>
    </ligand>
</feature>
<feature type="binding site" evidence="1">
    <location>
        <position position="114"/>
    </location>
    <ligand>
        <name>5-amino-6-(D-ribitylamino)uracil</name>
        <dbReference type="ChEBI" id="CHEBI:15934"/>
    </ligand>
</feature>
<feature type="binding site" evidence="1">
    <location>
        <position position="128"/>
    </location>
    <ligand>
        <name>(2S)-2-hydroxy-3-oxobutyl phosphate</name>
        <dbReference type="ChEBI" id="CHEBI:58830"/>
    </ligand>
</feature>
<reference key="1">
    <citation type="journal article" date="2002" name="Proc. Natl. Acad. Sci. U.S.A.">
        <title>Extensive mosaic structure revealed by the complete genome sequence of uropathogenic Escherichia coli.</title>
        <authorList>
            <person name="Welch R.A."/>
            <person name="Burland V."/>
            <person name="Plunkett G. III"/>
            <person name="Redford P."/>
            <person name="Roesch P."/>
            <person name="Rasko D."/>
            <person name="Buckles E.L."/>
            <person name="Liou S.-R."/>
            <person name="Boutin A."/>
            <person name="Hackett J."/>
            <person name="Stroud D."/>
            <person name="Mayhew G.F."/>
            <person name="Rose D.J."/>
            <person name="Zhou S."/>
            <person name="Schwartz D.C."/>
            <person name="Perna N.T."/>
            <person name="Mobley H.L.T."/>
            <person name="Donnenberg M.S."/>
            <person name="Blattner F.R."/>
        </authorList>
    </citation>
    <scope>NUCLEOTIDE SEQUENCE [LARGE SCALE GENOMIC DNA]</scope>
    <source>
        <strain>CFT073 / ATCC 700928 / UPEC</strain>
    </source>
</reference>
<protein>
    <recommendedName>
        <fullName evidence="1">6,7-dimethyl-8-ribityllumazine synthase</fullName>
        <shortName evidence="1">DMRL synthase</shortName>
        <shortName evidence="1">LS</shortName>
        <shortName evidence="1">Lumazine synthase</shortName>
        <ecNumber evidence="1">2.5.1.78</ecNumber>
    </recommendedName>
</protein>
<keyword id="KW-1185">Reference proteome</keyword>
<keyword id="KW-0686">Riboflavin biosynthesis</keyword>
<keyword id="KW-0808">Transferase</keyword>
<organism>
    <name type="scientific">Escherichia coli O6:H1 (strain CFT073 / ATCC 700928 / UPEC)</name>
    <dbReference type="NCBI Taxonomy" id="199310"/>
    <lineage>
        <taxon>Bacteria</taxon>
        <taxon>Pseudomonadati</taxon>
        <taxon>Pseudomonadota</taxon>
        <taxon>Gammaproteobacteria</taxon>
        <taxon>Enterobacterales</taxon>
        <taxon>Enterobacteriaceae</taxon>
        <taxon>Escherichia</taxon>
    </lineage>
</organism>